<reference key="1">
    <citation type="journal article" date="1992" name="Proc. Natl. Acad. Sci. U.S.A.">
        <title>Diversification of the Wnt gene family on the ancestral lineage of vertebrates.</title>
        <authorList>
            <person name="Sidow A."/>
        </authorList>
    </citation>
    <scope>NUCLEOTIDE SEQUENCE [GENOMIC DNA]</scope>
</reference>
<organism>
    <name type="scientific">Thunnus thynnus</name>
    <name type="common">Atlantic bluefin tuna</name>
    <name type="synonym">Scomber thynnus</name>
    <dbReference type="NCBI Taxonomy" id="8237"/>
    <lineage>
        <taxon>Eukaryota</taxon>
        <taxon>Metazoa</taxon>
        <taxon>Chordata</taxon>
        <taxon>Craniata</taxon>
        <taxon>Vertebrata</taxon>
        <taxon>Euteleostomi</taxon>
        <taxon>Actinopterygii</taxon>
        <taxon>Neopterygii</taxon>
        <taxon>Teleostei</taxon>
        <taxon>Neoteleostei</taxon>
        <taxon>Acanthomorphata</taxon>
        <taxon>Pelagiaria</taxon>
        <taxon>Scombriformes</taxon>
        <taxon>Scombridae</taxon>
        <taxon>Thunnus</taxon>
    </lineage>
</organism>
<proteinExistence type="inferred from homology"/>
<comment type="function">
    <text>Ligand for members of the frizzled family of seven transmembrane receptors. Probable developmental protein. May be a signaling molecule which affects the development of discrete regions of tissues. Is likely to signal over only few cell diameters.</text>
</comment>
<comment type="subcellular location">
    <subcellularLocation>
        <location>Secreted</location>
        <location>Extracellular space</location>
        <location>Extracellular matrix</location>
    </subcellularLocation>
</comment>
<comment type="PTM">
    <text evidence="1 3">Palmitoleoylation is required for efficient binding to frizzled receptors. Depalmitoleoylation leads to Wnt signaling pathway inhibition.</text>
</comment>
<comment type="similarity">
    <text evidence="5">Belongs to the Wnt family.</text>
</comment>
<gene>
    <name type="primary">wnt6</name>
</gene>
<name>WNT6_THUTH</name>
<dbReference type="EMBL" id="M91307">
    <property type="protein sequence ID" value="AAA49624.1"/>
    <property type="molecule type" value="Genomic_DNA"/>
</dbReference>
<dbReference type="SMR" id="P28145"/>
<dbReference type="GlyCosmos" id="P28145">
    <property type="glycosylation" value="1 site, No reported glycans"/>
</dbReference>
<dbReference type="GO" id="GO:0005615">
    <property type="term" value="C:extracellular space"/>
    <property type="evidence" value="ECO:0007669"/>
    <property type="project" value="TreeGrafter"/>
</dbReference>
<dbReference type="GO" id="GO:0005125">
    <property type="term" value="F:cytokine activity"/>
    <property type="evidence" value="ECO:0007669"/>
    <property type="project" value="TreeGrafter"/>
</dbReference>
<dbReference type="GO" id="GO:0005109">
    <property type="term" value="F:frizzled binding"/>
    <property type="evidence" value="ECO:0007669"/>
    <property type="project" value="TreeGrafter"/>
</dbReference>
<dbReference type="GO" id="GO:0048513">
    <property type="term" value="P:animal organ development"/>
    <property type="evidence" value="ECO:0007669"/>
    <property type="project" value="UniProtKB-ARBA"/>
</dbReference>
<dbReference type="GO" id="GO:0060070">
    <property type="term" value="P:canonical Wnt signaling pathway"/>
    <property type="evidence" value="ECO:0007669"/>
    <property type="project" value="TreeGrafter"/>
</dbReference>
<dbReference type="GO" id="GO:0045165">
    <property type="term" value="P:cell fate commitment"/>
    <property type="evidence" value="ECO:0007669"/>
    <property type="project" value="TreeGrafter"/>
</dbReference>
<dbReference type="GO" id="GO:0030182">
    <property type="term" value="P:neuron differentiation"/>
    <property type="evidence" value="ECO:0007669"/>
    <property type="project" value="TreeGrafter"/>
</dbReference>
<dbReference type="Gene3D" id="3.30.2460.20">
    <property type="match status" value="1"/>
</dbReference>
<dbReference type="InterPro" id="IPR005817">
    <property type="entry name" value="Wnt"/>
</dbReference>
<dbReference type="InterPro" id="IPR043158">
    <property type="entry name" value="Wnt_C"/>
</dbReference>
<dbReference type="PANTHER" id="PTHR12027:SF72">
    <property type="entry name" value="PROTEIN WNT-6"/>
    <property type="match status" value="1"/>
</dbReference>
<dbReference type="PANTHER" id="PTHR12027">
    <property type="entry name" value="WNT RELATED"/>
    <property type="match status" value="1"/>
</dbReference>
<dbReference type="Pfam" id="PF00110">
    <property type="entry name" value="wnt"/>
    <property type="match status" value="1"/>
</dbReference>
<dbReference type="SMART" id="SM00097">
    <property type="entry name" value="WNT1"/>
    <property type="match status" value="1"/>
</dbReference>
<sequence>SGSCTLRTCWKKMPHFREVGDRLLERFNGASKVMGGNDGKTLIPVGQNIKPPDKQDLIYSDESPDFCLANRKTGSLGTRGRMCNSTAMDISGCDLLCCERGYREESVVFEENCLCRF</sequence>
<accession>P28145</accession>
<feature type="chain" id="PRO_0000200641" description="Protein Wnt-6">
    <location>
        <begin position="1" status="less than"/>
        <end position="117" status="greater than"/>
    </location>
</feature>
<feature type="lipid moiety-binding region" description="O-palmitoleoyl serine; by PORCN" evidence="3">
    <location>
        <position position="1"/>
    </location>
</feature>
<feature type="glycosylation site" description="N-linked (GlcNAc...) asparagine" evidence="4">
    <location>
        <position position="84"/>
    </location>
</feature>
<feature type="disulfide bond" evidence="2">
    <location>
        <begin position="83"/>
        <end position="98"/>
    </location>
</feature>
<feature type="non-terminal residue">
    <location>
        <position position="1"/>
    </location>
</feature>
<feature type="non-terminal residue">
    <location>
        <position position="117"/>
    </location>
</feature>
<keyword id="KW-0217">Developmental protein</keyword>
<keyword id="KW-1015">Disulfide bond</keyword>
<keyword id="KW-0272">Extracellular matrix</keyword>
<keyword id="KW-0325">Glycoprotein</keyword>
<keyword id="KW-0449">Lipoprotein</keyword>
<keyword id="KW-0964">Secreted</keyword>
<keyword id="KW-0879">Wnt signaling pathway</keyword>
<protein>
    <recommendedName>
        <fullName>Protein Wnt-6</fullName>
    </recommendedName>
</protein>
<evidence type="ECO:0000250" key="1">
    <source>
        <dbReference type="UniProtKB" id="P27467"/>
    </source>
</evidence>
<evidence type="ECO:0000250" key="2">
    <source>
        <dbReference type="UniProtKB" id="P28026"/>
    </source>
</evidence>
<evidence type="ECO:0000250" key="3">
    <source>
        <dbReference type="UniProtKB" id="P56704"/>
    </source>
</evidence>
<evidence type="ECO:0000255" key="4"/>
<evidence type="ECO:0000305" key="5"/>